<evidence type="ECO:0000255" key="1">
    <source>
        <dbReference type="HAMAP-Rule" id="MF_00361"/>
    </source>
</evidence>
<reference key="1">
    <citation type="submission" date="2008-06" db="EMBL/GenBank/DDBJ databases">
        <title>Complete sequence of chromosome of Prosthecochloris aestuarii DSM 271.</title>
        <authorList>
            <consortium name="US DOE Joint Genome Institute"/>
            <person name="Lucas S."/>
            <person name="Copeland A."/>
            <person name="Lapidus A."/>
            <person name="Glavina del Rio T."/>
            <person name="Dalin E."/>
            <person name="Tice H."/>
            <person name="Bruce D."/>
            <person name="Goodwin L."/>
            <person name="Pitluck S."/>
            <person name="Schmutz J."/>
            <person name="Larimer F."/>
            <person name="Land M."/>
            <person name="Hauser L."/>
            <person name="Kyrpides N."/>
            <person name="Anderson I."/>
            <person name="Liu Z."/>
            <person name="Li T."/>
            <person name="Zhao F."/>
            <person name="Overmann J."/>
            <person name="Bryant D.A."/>
            <person name="Richardson P."/>
        </authorList>
    </citation>
    <scope>NUCLEOTIDE SEQUENCE [LARGE SCALE GENOMIC DNA]</scope>
    <source>
        <strain>DSM 271 / SK 413</strain>
    </source>
</reference>
<accession>B4S665</accession>
<gene>
    <name evidence="1" type="primary">nadK</name>
    <name type="ordered locus">Paes_2165</name>
</gene>
<proteinExistence type="inferred from homology"/>
<sequence>MKFAIVVNINREDALELAQELTSWLQERGLSYVLDSVSGEKTGIEPSMAMEELNKDCDAFISLGGDGTLLFTSHYSVTKPVIGINVGHLGFLAEFSKAEMFEAVEQVLNGTYSIHVRSQLEAEVTMNGGLKHLTALNDVVIEKGAYPRIPTFIIKLDDELLSAYRADGIIIATSTGSTAYSLSAGGPIIAPKSNVFVITPICPHMLTVRPIVISDDKTIQISVEAHGGEFPLNCDGHVSKMLLPGETIIVRKSEQIINLVENKNRRYCEILRSKLLWGHEHQSGS</sequence>
<keyword id="KW-0067">ATP-binding</keyword>
<keyword id="KW-0963">Cytoplasm</keyword>
<keyword id="KW-0418">Kinase</keyword>
<keyword id="KW-0520">NAD</keyword>
<keyword id="KW-0521">NADP</keyword>
<keyword id="KW-0547">Nucleotide-binding</keyword>
<keyword id="KW-0808">Transferase</keyword>
<protein>
    <recommendedName>
        <fullName evidence="1">NAD kinase</fullName>
        <ecNumber evidence="1">2.7.1.23</ecNumber>
    </recommendedName>
    <alternativeName>
        <fullName evidence="1">ATP-dependent NAD kinase</fullName>
    </alternativeName>
</protein>
<feature type="chain" id="PRO_1000120877" description="NAD kinase">
    <location>
        <begin position="1"/>
        <end position="285"/>
    </location>
</feature>
<feature type="active site" description="Proton acceptor" evidence="1">
    <location>
        <position position="66"/>
    </location>
</feature>
<feature type="binding site" evidence="1">
    <location>
        <begin position="66"/>
        <end position="67"/>
    </location>
    <ligand>
        <name>NAD(+)</name>
        <dbReference type="ChEBI" id="CHEBI:57540"/>
    </ligand>
</feature>
<feature type="binding site" evidence="1">
    <location>
        <begin position="137"/>
        <end position="138"/>
    </location>
    <ligand>
        <name>NAD(+)</name>
        <dbReference type="ChEBI" id="CHEBI:57540"/>
    </ligand>
</feature>
<feature type="binding site" evidence="1">
    <location>
        <position position="148"/>
    </location>
    <ligand>
        <name>NAD(+)</name>
        <dbReference type="ChEBI" id="CHEBI:57540"/>
    </ligand>
</feature>
<feature type="binding site" evidence="1">
    <location>
        <position position="165"/>
    </location>
    <ligand>
        <name>NAD(+)</name>
        <dbReference type="ChEBI" id="CHEBI:57540"/>
    </ligand>
</feature>
<feature type="binding site" evidence="1">
    <location>
        <position position="167"/>
    </location>
    <ligand>
        <name>NAD(+)</name>
        <dbReference type="ChEBI" id="CHEBI:57540"/>
    </ligand>
</feature>
<feature type="binding site" evidence="1">
    <location>
        <begin position="178"/>
        <end position="183"/>
    </location>
    <ligand>
        <name>NAD(+)</name>
        <dbReference type="ChEBI" id="CHEBI:57540"/>
    </ligand>
</feature>
<name>NADK_PROA2</name>
<dbReference type="EC" id="2.7.1.23" evidence="1"/>
<dbReference type="EMBL" id="CP001108">
    <property type="protein sequence ID" value="ACF47167.1"/>
    <property type="molecule type" value="Genomic_DNA"/>
</dbReference>
<dbReference type="RefSeq" id="WP_012506698.1">
    <property type="nucleotide sequence ID" value="NC_011059.1"/>
</dbReference>
<dbReference type="SMR" id="B4S665"/>
<dbReference type="STRING" id="290512.Paes_2165"/>
<dbReference type="KEGG" id="paa:Paes_2165"/>
<dbReference type="eggNOG" id="COG0061">
    <property type="taxonomic scope" value="Bacteria"/>
</dbReference>
<dbReference type="HOGENOM" id="CLU_008831_0_1_10"/>
<dbReference type="Proteomes" id="UP000002725">
    <property type="component" value="Chromosome"/>
</dbReference>
<dbReference type="GO" id="GO:0005737">
    <property type="term" value="C:cytoplasm"/>
    <property type="evidence" value="ECO:0007669"/>
    <property type="project" value="UniProtKB-SubCell"/>
</dbReference>
<dbReference type="GO" id="GO:0005524">
    <property type="term" value="F:ATP binding"/>
    <property type="evidence" value="ECO:0007669"/>
    <property type="project" value="UniProtKB-KW"/>
</dbReference>
<dbReference type="GO" id="GO:0046872">
    <property type="term" value="F:metal ion binding"/>
    <property type="evidence" value="ECO:0007669"/>
    <property type="project" value="UniProtKB-UniRule"/>
</dbReference>
<dbReference type="GO" id="GO:0051287">
    <property type="term" value="F:NAD binding"/>
    <property type="evidence" value="ECO:0007669"/>
    <property type="project" value="UniProtKB-ARBA"/>
</dbReference>
<dbReference type="GO" id="GO:0003951">
    <property type="term" value="F:NAD+ kinase activity"/>
    <property type="evidence" value="ECO:0007669"/>
    <property type="project" value="UniProtKB-UniRule"/>
</dbReference>
<dbReference type="GO" id="GO:0019674">
    <property type="term" value="P:NAD metabolic process"/>
    <property type="evidence" value="ECO:0007669"/>
    <property type="project" value="InterPro"/>
</dbReference>
<dbReference type="GO" id="GO:0006741">
    <property type="term" value="P:NADP biosynthetic process"/>
    <property type="evidence" value="ECO:0007669"/>
    <property type="project" value="UniProtKB-UniRule"/>
</dbReference>
<dbReference type="Gene3D" id="3.40.50.10330">
    <property type="entry name" value="Probable inorganic polyphosphate/atp-NAD kinase, domain 1"/>
    <property type="match status" value="1"/>
</dbReference>
<dbReference type="Gene3D" id="2.60.200.30">
    <property type="entry name" value="Probable inorganic polyphosphate/atp-NAD kinase, domain 2"/>
    <property type="match status" value="1"/>
</dbReference>
<dbReference type="HAMAP" id="MF_00361">
    <property type="entry name" value="NAD_kinase"/>
    <property type="match status" value="1"/>
</dbReference>
<dbReference type="InterPro" id="IPR017438">
    <property type="entry name" value="ATP-NAD_kinase_N"/>
</dbReference>
<dbReference type="InterPro" id="IPR017437">
    <property type="entry name" value="ATP-NAD_kinase_PpnK-typ_C"/>
</dbReference>
<dbReference type="InterPro" id="IPR016064">
    <property type="entry name" value="NAD/diacylglycerol_kinase_sf"/>
</dbReference>
<dbReference type="InterPro" id="IPR002504">
    <property type="entry name" value="NADK"/>
</dbReference>
<dbReference type="PANTHER" id="PTHR20275">
    <property type="entry name" value="NAD KINASE"/>
    <property type="match status" value="1"/>
</dbReference>
<dbReference type="PANTHER" id="PTHR20275:SF0">
    <property type="entry name" value="NAD KINASE"/>
    <property type="match status" value="1"/>
</dbReference>
<dbReference type="Pfam" id="PF01513">
    <property type="entry name" value="NAD_kinase"/>
    <property type="match status" value="1"/>
</dbReference>
<dbReference type="Pfam" id="PF20143">
    <property type="entry name" value="NAD_kinase_C"/>
    <property type="match status" value="1"/>
</dbReference>
<dbReference type="SUPFAM" id="SSF111331">
    <property type="entry name" value="NAD kinase/diacylglycerol kinase-like"/>
    <property type="match status" value="1"/>
</dbReference>
<comment type="function">
    <text evidence="1">Involved in the regulation of the intracellular balance of NAD and NADP, and is a key enzyme in the biosynthesis of NADP. Catalyzes specifically the phosphorylation on 2'-hydroxyl of the adenosine moiety of NAD to yield NADP.</text>
</comment>
<comment type="catalytic activity">
    <reaction evidence="1">
        <text>NAD(+) + ATP = ADP + NADP(+) + H(+)</text>
        <dbReference type="Rhea" id="RHEA:18629"/>
        <dbReference type="ChEBI" id="CHEBI:15378"/>
        <dbReference type="ChEBI" id="CHEBI:30616"/>
        <dbReference type="ChEBI" id="CHEBI:57540"/>
        <dbReference type="ChEBI" id="CHEBI:58349"/>
        <dbReference type="ChEBI" id="CHEBI:456216"/>
        <dbReference type="EC" id="2.7.1.23"/>
    </reaction>
</comment>
<comment type="cofactor">
    <cofactor evidence="1">
        <name>a divalent metal cation</name>
        <dbReference type="ChEBI" id="CHEBI:60240"/>
    </cofactor>
</comment>
<comment type="subcellular location">
    <subcellularLocation>
        <location evidence="1">Cytoplasm</location>
    </subcellularLocation>
</comment>
<comment type="similarity">
    <text evidence="1">Belongs to the NAD kinase family.</text>
</comment>
<organism>
    <name type="scientific">Prosthecochloris aestuarii (strain DSM 271 / SK 413)</name>
    <dbReference type="NCBI Taxonomy" id="290512"/>
    <lineage>
        <taxon>Bacteria</taxon>
        <taxon>Pseudomonadati</taxon>
        <taxon>Chlorobiota</taxon>
        <taxon>Chlorobiia</taxon>
        <taxon>Chlorobiales</taxon>
        <taxon>Chlorobiaceae</taxon>
        <taxon>Prosthecochloris</taxon>
    </lineage>
</organism>